<proteinExistence type="inferred from homology"/>
<name>HSLV_RICPU</name>
<comment type="function">
    <text evidence="1">Protease subunit of a proteasome-like degradation complex believed to be a general protein degrading machinery.</text>
</comment>
<comment type="catalytic activity">
    <reaction evidence="1">
        <text>ATP-dependent cleavage of peptide bonds with broad specificity.</text>
        <dbReference type="EC" id="3.4.25.2"/>
    </reaction>
</comment>
<comment type="activity regulation">
    <text evidence="1">Allosterically activated by HslU binding.</text>
</comment>
<comment type="subunit">
    <text evidence="1">A double ring-shaped homohexamer of HslV is capped on each side by a ring-shaped HslU homohexamer. The assembly of the HslU/HslV complex is dependent on binding of ATP.</text>
</comment>
<comment type="subcellular location">
    <subcellularLocation>
        <location evidence="1">Cytoplasm</location>
    </subcellularLocation>
</comment>
<comment type="similarity">
    <text evidence="1">Belongs to the peptidase T1B family. HslV subfamily.</text>
</comment>
<organism>
    <name type="scientific">Rickettsia peacockii (strain Rustic)</name>
    <dbReference type="NCBI Taxonomy" id="562019"/>
    <lineage>
        <taxon>Bacteria</taxon>
        <taxon>Pseudomonadati</taxon>
        <taxon>Pseudomonadota</taxon>
        <taxon>Alphaproteobacteria</taxon>
        <taxon>Rickettsiales</taxon>
        <taxon>Rickettsiaceae</taxon>
        <taxon>Rickettsieae</taxon>
        <taxon>Rickettsia</taxon>
        <taxon>spotted fever group</taxon>
    </lineage>
</organism>
<sequence>MSDNLSLHGTTILCLKKNEEIIIAADGQVSHGNTVLKSTARKLRTIANNKIIAGFAGSTADGLALFEKLAVKIEQHKHNLLRSAVELAKDWRSDKYLRRLEAMMIVADRSHILILTGNGDVVEPEKNVAAIGSGGLFALSAARALMSYENNLTAEEIALKSMNIAADLCVFSNHNIIMEKVV</sequence>
<gene>
    <name evidence="1" type="primary">hslV</name>
    <name type="ordered locus">RPR_04485</name>
</gene>
<feature type="chain" id="PRO_1000204514" description="ATP-dependent protease subunit HslV">
    <location>
        <begin position="1"/>
        <end position="182"/>
    </location>
</feature>
<feature type="active site" evidence="1">
    <location>
        <position position="10"/>
    </location>
</feature>
<feature type="binding site" evidence="1">
    <location>
        <position position="166"/>
    </location>
    <ligand>
        <name>Na(+)</name>
        <dbReference type="ChEBI" id="CHEBI:29101"/>
    </ligand>
</feature>
<feature type="binding site" evidence="1">
    <location>
        <position position="169"/>
    </location>
    <ligand>
        <name>Na(+)</name>
        <dbReference type="ChEBI" id="CHEBI:29101"/>
    </ligand>
</feature>
<feature type="binding site" evidence="1">
    <location>
        <position position="172"/>
    </location>
    <ligand>
        <name>Na(+)</name>
        <dbReference type="ChEBI" id="CHEBI:29101"/>
    </ligand>
</feature>
<reference key="1">
    <citation type="journal article" date="2009" name="PLoS ONE">
        <title>Genome sequence of the endosymbiont Rickettsia peacockii and comparison with virulent Rickettsia rickettsii: identification of virulence factors.</title>
        <authorList>
            <person name="Felsheim R.F."/>
            <person name="Kurtti T.J."/>
            <person name="Munderloh U.G."/>
        </authorList>
    </citation>
    <scope>NUCLEOTIDE SEQUENCE [LARGE SCALE GENOMIC DNA]</scope>
    <source>
        <strain>Rustic</strain>
    </source>
</reference>
<dbReference type="EC" id="3.4.25.2" evidence="1"/>
<dbReference type="EMBL" id="CP001227">
    <property type="protein sequence ID" value="ACR47571.1"/>
    <property type="molecule type" value="Genomic_DNA"/>
</dbReference>
<dbReference type="RefSeq" id="WP_012736791.1">
    <property type="nucleotide sequence ID" value="NC_012730.1"/>
</dbReference>
<dbReference type="SMR" id="C4K1X3"/>
<dbReference type="KEGG" id="rpk:RPR_04485"/>
<dbReference type="HOGENOM" id="CLU_093872_1_0_5"/>
<dbReference type="Proteomes" id="UP000005015">
    <property type="component" value="Chromosome"/>
</dbReference>
<dbReference type="GO" id="GO:0009376">
    <property type="term" value="C:HslUV protease complex"/>
    <property type="evidence" value="ECO:0007669"/>
    <property type="project" value="UniProtKB-UniRule"/>
</dbReference>
<dbReference type="GO" id="GO:0005839">
    <property type="term" value="C:proteasome core complex"/>
    <property type="evidence" value="ECO:0007669"/>
    <property type="project" value="InterPro"/>
</dbReference>
<dbReference type="GO" id="GO:0046872">
    <property type="term" value="F:metal ion binding"/>
    <property type="evidence" value="ECO:0007669"/>
    <property type="project" value="UniProtKB-KW"/>
</dbReference>
<dbReference type="GO" id="GO:0004298">
    <property type="term" value="F:threonine-type endopeptidase activity"/>
    <property type="evidence" value="ECO:0007669"/>
    <property type="project" value="UniProtKB-KW"/>
</dbReference>
<dbReference type="GO" id="GO:0051603">
    <property type="term" value="P:proteolysis involved in protein catabolic process"/>
    <property type="evidence" value="ECO:0007669"/>
    <property type="project" value="InterPro"/>
</dbReference>
<dbReference type="CDD" id="cd01913">
    <property type="entry name" value="protease_HslV"/>
    <property type="match status" value="1"/>
</dbReference>
<dbReference type="Gene3D" id="3.60.20.10">
    <property type="entry name" value="Glutamine Phosphoribosylpyrophosphate, subunit 1, domain 1"/>
    <property type="match status" value="1"/>
</dbReference>
<dbReference type="HAMAP" id="MF_00248">
    <property type="entry name" value="HslV"/>
    <property type="match status" value="1"/>
</dbReference>
<dbReference type="InterPro" id="IPR022281">
    <property type="entry name" value="ATP-dep_Prtase_HsIV_su"/>
</dbReference>
<dbReference type="InterPro" id="IPR029055">
    <property type="entry name" value="Ntn_hydrolases_N"/>
</dbReference>
<dbReference type="InterPro" id="IPR001353">
    <property type="entry name" value="Proteasome_sua/b"/>
</dbReference>
<dbReference type="InterPro" id="IPR023333">
    <property type="entry name" value="Proteasome_suB-type"/>
</dbReference>
<dbReference type="NCBIfam" id="TIGR03692">
    <property type="entry name" value="ATP_dep_HslV"/>
    <property type="match status" value="1"/>
</dbReference>
<dbReference type="NCBIfam" id="NF003964">
    <property type="entry name" value="PRK05456.1"/>
    <property type="match status" value="1"/>
</dbReference>
<dbReference type="PANTHER" id="PTHR32194:SF0">
    <property type="entry name" value="ATP-DEPENDENT PROTEASE SUBUNIT HSLV"/>
    <property type="match status" value="1"/>
</dbReference>
<dbReference type="PANTHER" id="PTHR32194">
    <property type="entry name" value="METALLOPROTEASE TLDD"/>
    <property type="match status" value="1"/>
</dbReference>
<dbReference type="Pfam" id="PF00227">
    <property type="entry name" value="Proteasome"/>
    <property type="match status" value="1"/>
</dbReference>
<dbReference type="PIRSF" id="PIRSF039093">
    <property type="entry name" value="HslV"/>
    <property type="match status" value="1"/>
</dbReference>
<dbReference type="SUPFAM" id="SSF56235">
    <property type="entry name" value="N-terminal nucleophile aminohydrolases (Ntn hydrolases)"/>
    <property type="match status" value="1"/>
</dbReference>
<dbReference type="PROSITE" id="PS51476">
    <property type="entry name" value="PROTEASOME_BETA_2"/>
    <property type="match status" value="1"/>
</dbReference>
<protein>
    <recommendedName>
        <fullName evidence="1">ATP-dependent protease subunit HslV</fullName>
        <ecNumber evidence="1">3.4.25.2</ecNumber>
    </recommendedName>
</protein>
<accession>C4K1X3</accession>
<evidence type="ECO:0000255" key="1">
    <source>
        <dbReference type="HAMAP-Rule" id="MF_00248"/>
    </source>
</evidence>
<keyword id="KW-0021">Allosteric enzyme</keyword>
<keyword id="KW-0963">Cytoplasm</keyword>
<keyword id="KW-0378">Hydrolase</keyword>
<keyword id="KW-0479">Metal-binding</keyword>
<keyword id="KW-0645">Protease</keyword>
<keyword id="KW-0915">Sodium</keyword>
<keyword id="KW-0888">Threonine protease</keyword>